<organism>
    <name type="scientific">Rattus norvegicus</name>
    <name type="common">Rat</name>
    <dbReference type="NCBI Taxonomy" id="10116"/>
    <lineage>
        <taxon>Eukaryota</taxon>
        <taxon>Metazoa</taxon>
        <taxon>Chordata</taxon>
        <taxon>Craniata</taxon>
        <taxon>Vertebrata</taxon>
        <taxon>Euteleostomi</taxon>
        <taxon>Mammalia</taxon>
        <taxon>Eutheria</taxon>
        <taxon>Euarchontoglires</taxon>
        <taxon>Glires</taxon>
        <taxon>Rodentia</taxon>
        <taxon>Myomorpha</taxon>
        <taxon>Muroidea</taxon>
        <taxon>Muridae</taxon>
        <taxon>Murinae</taxon>
        <taxon>Rattus</taxon>
    </lineage>
</organism>
<proteinExistence type="evidence at protein level"/>
<feature type="signal peptide" evidence="6">
    <location>
        <begin position="1"/>
        <end position="17"/>
    </location>
</feature>
<feature type="chain" id="PRO_0000024027" description="Alkaline phosphatase, tissue-nonspecific isozyme">
    <location>
        <begin position="18"/>
        <end position="501"/>
    </location>
</feature>
<feature type="propeptide" id="PRO_0000024028" description="Removed in mature form" evidence="4">
    <location>
        <begin position="502"/>
        <end position="524"/>
    </location>
</feature>
<feature type="active site" description="Phosphoserine intermediate" evidence="2 5">
    <location>
        <position position="110"/>
    </location>
</feature>
<feature type="binding site" evidence="2">
    <location>
        <position position="60"/>
    </location>
    <ligand>
        <name>Mg(2+)</name>
        <dbReference type="ChEBI" id="CHEBI:18420"/>
    </ligand>
</feature>
<feature type="binding site" evidence="2">
    <location>
        <position position="60"/>
    </location>
    <ligand>
        <name>Zn(2+)</name>
        <dbReference type="ChEBI" id="CHEBI:29105"/>
        <label>1</label>
    </ligand>
</feature>
<feature type="binding site" evidence="2">
    <location>
        <position position="110"/>
    </location>
    <ligand>
        <name>Zn(2+)</name>
        <dbReference type="ChEBI" id="CHEBI:29105"/>
        <label>1</label>
    </ligand>
</feature>
<feature type="binding site" evidence="2">
    <location>
        <position position="173"/>
    </location>
    <ligand>
        <name>Mg(2+)</name>
        <dbReference type="ChEBI" id="CHEBI:18420"/>
    </ligand>
</feature>
<feature type="binding site" evidence="1">
    <location>
        <position position="235"/>
    </location>
    <ligand>
        <name>Ca(2+)</name>
        <dbReference type="ChEBI" id="CHEBI:29108"/>
    </ligand>
</feature>
<feature type="binding site" evidence="1">
    <location>
        <position position="290"/>
    </location>
    <ligand>
        <name>Ca(2+)</name>
        <dbReference type="ChEBI" id="CHEBI:29108"/>
    </ligand>
</feature>
<feature type="binding site" evidence="1">
    <location>
        <position position="291"/>
    </location>
    <ligand>
        <name>Ca(2+)</name>
        <dbReference type="ChEBI" id="CHEBI:29108"/>
    </ligand>
</feature>
<feature type="binding site" evidence="1">
    <location>
        <position position="306"/>
    </location>
    <ligand>
        <name>Ca(2+)</name>
        <dbReference type="ChEBI" id="CHEBI:29108"/>
    </ligand>
</feature>
<feature type="binding site" evidence="2">
    <location>
        <position position="332"/>
    </location>
    <ligand>
        <name>Mg(2+)</name>
        <dbReference type="ChEBI" id="CHEBI:18420"/>
    </ligand>
</feature>
<feature type="binding site" evidence="2">
    <location>
        <position position="337"/>
    </location>
    <ligand>
        <name>Zn(2+)</name>
        <dbReference type="ChEBI" id="CHEBI:29105"/>
        <label>2</label>
    </ligand>
</feature>
<feature type="binding site" evidence="2">
    <location>
        <position position="341"/>
    </location>
    <ligand>
        <name>Zn(2+)</name>
        <dbReference type="ChEBI" id="CHEBI:29105"/>
        <label>2</label>
    </ligand>
</feature>
<feature type="binding site" evidence="2">
    <location>
        <position position="378"/>
    </location>
    <ligand>
        <name>Zn(2+)</name>
        <dbReference type="ChEBI" id="CHEBI:29105"/>
        <label>1</label>
    </ligand>
</feature>
<feature type="binding site" evidence="2">
    <location>
        <position position="379"/>
    </location>
    <ligand>
        <name>Zn(2+)</name>
        <dbReference type="ChEBI" id="CHEBI:29105"/>
        <label>1</label>
    </ligand>
</feature>
<feature type="binding site" evidence="2">
    <location>
        <position position="454"/>
    </location>
    <ligand>
        <name>Zn(2+)</name>
        <dbReference type="ChEBI" id="CHEBI:29105"/>
        <label>2</label>
    </ligand>
</feature>
<feature type="modified residue" description="Phosphoserine" evidence="11">
    <location>
        <position position="110"/>
    </location>
</feature>
<feature type="lipid moiety-binding region" description="GPI-anchor amidated serine" evidence="4">
    <location>
        <position position="501"/>
    </location>
</feature>
<feature type="glycosylation site" description="N-linked (GlcNAc...) asparagine" evidence="4">
    <location>
        <position position="140"/>
    </location>
</feature>
<feature type="glycosylation site" description="N-linked (GlcNAc...) asparagine" evidence="4">
    <location>
        <position position="230"/>
    </location>
</feature>
<feature type="glycosylation site" description="N-linked (GlcNAc...) asparagine" evidence="4">
    <location>
        <position position="271"/>
    </location>
</feature>
<feature type="glycosylation site" description="N-linked (GlcNAc...) asparagine" evidence="4">
    <location>
        <position position="303"/>
    </location>
</feature>
<feature type="glycosylation site" description="N-linked (GlcNAc...) asparagine" evidence="4">
    <location>
        <position position="430"/>
    </location>
</feature>
<feature type="disulfide bond" evidence="2">
    <location>
        <begin position="139"/>
        <end position="201"/>
    </location>
</feature>
<feature type="disulfide bond" evidence="2">
    <location>
        <begin position="489"/>
        <end position="497"/>
    </location>
</feature>
<feature type="sequence conflict" description="In Ref. 1; AAA41845." evidence="9" ref="1">
    <original>T</original>
    <variation>P</variation>
    <location>
        <position position="12"/>
    </location>
</feature>
<feature type="sequence conflict" description="In Ref. 2." evidence="9" ref="2">
    <original>A</original>
    <variation>Y</variation>
    <location>
        <position position="116"/>
    </location>
</feature>
<feature type="sequence conflict" description="In Ref. 1; AAA41845." evidence="9" ref="1">
    <original>P</original>
    <variation>R</variation>
    <location>
        <position position="193"/>
    </location>
</feature>
<feature type="sequence conflict" description="In Ref. 2; CAA68703." evidence="9" ref="2">
    <original>V</original>
    <variation>E</variation>
    <location>
        <position position="234"/>
    </location>
</feature>
<feature type="sequence conflict" description="In Ref. 2; CAA68703." evidence="9" ref="2">
    <original>S</original>
    <variation>T</variation>
    <location>
        <position position="254"/>
    </location>
</feature>
<feature type="sequence conflict" description="In Ref. 2; CAA68703." evidence="9" ref="2">
    <original>V</original>
    <variation>E</variation>
    <location>
        <position position="331"/>
    </location>
</feature>
<feature type="sequence conflict" description="In Ref. 2; CAA68703." evidence="9" ref="2">
    <original>V</original>
    <variation>L</variation>
    <location>
        <position position="374"/>
    </location>
</feature>
<feature type="sequence conflict" description="In Ref. 2." evidence="9" ref="2">
    <original>SHVFTFGGY</original>
    <variation>HPTFSRLVA</variation>
    <location>
        <begin position="380"/>
        <end position="388"/>
    </location>
</feature>
<feature type="sequence conflict" description="In Ref. 2." evidence="9" ref="2">
    <original>R</original>
    <variation>Q</variation>
    <location>
        <position position="391"/>
    </location>
</feature>
<feature type="sequence conflict" description="In Ref. 2; CAA68703." evidence="9" ref="2">
    <original>A</original>
    <variation>C</variation>
    <location>
        <position position="463"/>
    </location>
</feature>
<feature type="sequence conflict" description="In Ref. 2; CAA68703." evidence="9" ref="2">
    <original>V</original>
    <variation>I</variation>
    <location>
        <position position="474"/>
    </location>
</feature>
<gene>
    <name type="primary">Alpl</name>
</gene>
<keyword id="KW-0091">Biomineralization</keyword>
<keyword id="KW-0106">Calcium</keyword>
<keyword id="KW-1003">Cell membrane</keyword>
<keyword id="KW-0903">Direct protein sequencing</keyword>
<keyword id="KW-1015">Disulfide bond</keyword>
<keyword id="KW-0325">Glycoprotein</keyword>
<keyword id="KW-0336">GPI-anchor</keyword>
<keyword id="KW-0378">Hydrolase</keyword>
<keyword id="KW-0449">Lipoprotein</keyword>
<keyword id="KW-0460">Magnesium</keyword>
<keyword id="KW-0472">Membrane</keyword>
<keyword id="KW-0479">Metal-binding</keyword>
<keyword id="KW-0496">Mitochondrion</keyword>
<keyword id="KW-0597">Phosphoprotein</keyword>
<keyword id="KW-1185">Reference proteome</keyword>
<keyword id="KW-0732">Signal</keyword>
<keyword id="KW-0862">Zinc</keyword>
<accession>P08289</accession>
<accession>P14055</accession>
<accession>P70707</accession>
<sequence length="524" mass="57659">MILPFLVLAIGTCLTNSFVPEKEKDPSYWRQQAQETLKNALKLQKLNTNVAKNIIMFLGDGMGVSTVTAARILKGQLHHNTGEETRLEMDKFPFVALSKTYNTNAQVPDSAGTATAYLCGVKANEGTVGVSAATERTRCNTTQGNEVTSILRWAKDAGKSVGIVTTTRVNHATPSAAYAHSADRDWYSDNEMPPEALSQGCKDIAYQLMHNIKDIDVIMGGGRKYMYPKNRTDVEYELDEKARGTRLDGLDLISIWKSFKPRHKHSHYVWNRTELLALDPSRVDYLLGLFEPGDMQYELNRNNLTDPSLSEMVEVALRILTKNPKGFFLLVEGGRIDHGHHEGKAKQALHEAVEMDEAIGKAGTMTSQKDTLTVVTADHSHVFTFGGYTPRGNSIFGLAPMVSDTDKKPFTAILYGNGPGYKVVDGERENVSMVDYAHNNYQAQSAVPLRHETHGGEDVAVFAKGPMAHLLHGVHEQNYIPHVMAYASCIGANLDHCAWASSASSPSPGALLLPLALFPLRTLF</sequence>
<name>PPBT_RAT</name>
<evidence type="ECO:0000250" key="1">
    <source>
        <dbReference type="UniProtKB" id="P05186"/>
    </source>
</evidence>
<evidence type="ECO:0000250" key="2">
    <source>
        <dbReference type="UniProtKB" id="P05187"/>
    </source>
</evidence>
<evidence type="ECO:0000250" key="3">
    <source>
        <dbReference type="UniProtKB" id="P09242"/>
    </source>
</evidence>
<evidence type="ECO:0000255" key="4"/>
<evidence type="ECO:0000255" key="5">
    <source>
        <dbReference type="PROSITE-ProRule" id="PRU10042"/>
    </source>
</evidence>
<evidence type="ECO:0000269" key="6">
    <source>
    </source>
</evidence>
<evidence type="ECO:0000269" key="7">
    <source>
    </source>
</evidence>
<evidence type="ECO:0000303" key="8">
    <source>
    </source>
</evidence>
<evidence type="ECO:0000305" key="9"/>
<evidence type="ECO:0000305" key="10">
    <source>
    </source>
</evidence>
<evidence type="ECO:0007744" key="11">
    <source>
    </source>
</evidence>
<comment type="function">
    <text evidence="1 3">Alkaline phosphatase that metabolizes various phosphate compounds and plays a key role in skeletal mineralization and adaptive thermogenesis. Has broad substrate specificity and can hydrolyze a considerable variety of compounds: however, only a few substrates, such as diphosphate (inorganic pyrophosphate; PPi), pyridoxal 5'-phosphate (PLP) and N-phosphocreatine are natural substrates. Plays an essential role in skeletal and dental mineralization via its ability to hydrolyze extracellular diphosphate, a potent mineralization inhibitor, to phosphate: it thereby promotes hydroxyapatite crystal formation and increases inorganic phosphate concentration. Acts in a non-redundant manner with PHOSPHO1 in skeletal mineralization: while PHOSPHO1 mediates the initiation of hydroxyapatite crystallization in the matrix vesicles (MVs), ALPL/TNAP catalyzes the spread of hydroxyapatite crystallization in the extracellular matrix. Also promotes dephosphorylation of osteopontin (SSP1), an inhibitor of hydroxyapatite crystallization in its phosphorylated state; it is however unclear whether ALPL/TNAP mediates SSP1 dephosphorylation via a direct or indirect manner. Catalyzes dephosphorylation of PLP to pyridoxal (PL), the transportable form of vitamin B6, in order to provide a sufficient amount of PLP in the brain, an essential cofactor for enzymes catalyzing the synthesis of diverse neurotransmitters. Additionally, also able to mediate ATP degradation in a stepwise manner to adenosine, thereby regulating the availability of ligands for purinergic receptors (By similarity). Also capable of dephosphorylating microbial products, such as lipopolysaccharides (LPS) as well as other phosphorylated small-molecules, such as poly-inosine:cytosine (poly I:C) (By similarity). Acts as a key regulator of adaptive thermogenesis as part of the futile creatine cycle: localizes to the mitochondria of thermogenic fat cells and acts by mediating hydrolysis of N-phosphocreatine to initiate a futile cycle of creatine dephosphorylation and phosphorylation. During the futile creatine cycle, creatine and N-phosphocreatine are in a futile cycle, which dissipates the high energy charge of N-phosphocreatine as heat without performing any mechanical or chemical work (By similarity).</text>
</comment>
<comment type="catalytic activity">
    <reaction evidence="5 10">
        <text>a phosphate monoester + H2O = an alcohol + phosphate</text>
        <dbReference type="Rhea" id="RHEA:15017"/>
        <dbReference type="ChEBI" id="CHEBI:15377"/>
        <dbReference type="ChEBI" id="CHEBI:30879"/>
        <dbReference type="ChEBI" id="CHEBI:43474"/>
        <dbReference type="ChEBI" id="CHEBI:67140"/>
        <dbReference type="EC" id="3.1.3.1"/>
    </reaction>
    <physiologicalReaction direction="left-to-right" evidence="10">
        <dbReference type="Rhea" id="RHEA:15018"/>
    </physiologicalReaction>
</comment>
<comment type="catalytic activity">
    <reaction evidence="3">
        <text>diphosphate + H2O = 2 phosphate + H(+)</text>
        <dbReference type="Rhea" id="RHEA:24576"/>
        <dbReference type="ChEBI" id="CHEBI:15377"/>
        <dbReference type="ChEBI" id="CHEBI:15378"/>
        <dbReference type="ChEBI" id="CHEBI:33019"/>
        <dbReference type="ChEBI" id="CHEBI:43474"/>
    </reaction>
    <physiologicalReaction direction="left-to-right" evidence="3">
        <dbReference type="Rhea" id="RHEA:24577"/>
    </physiologicalReaction>
</comment>
<comment type="catalytic activity">
    <reaction evidence="1">
        <text>pyridoxal 5'-phosphate + H2O = pyridoxal + phosphate</text>
        <dbReference type="Rhea" id="RHEA:20533"/>
        <dbReference type="ChEBI" id="CHEBI:15377"/>
        <dbReference type="ChEBI" id="CHEBI:17310"/>
        <dbReference type="ChEBI" id="CHEBI:43474"/>
        <dbReference type="ChEBI" id="CHEBI:597326"/>
    </reaction>
    <physiologicalReaction direction="left-to-right" evidence="1">
        <dbReference type="Rhea" id="RHEA:20534"/>
    </physiologicalReaction>
</comment>
<comment type="catalytic activity">
    <reaction evidence="1">
        <text>phosphoethanolamine + H2O = ethanolamine + phosphate</text>
        <dbReference type="Rhea" id="RHEA:16089"/>
        <dbReference type="ChEBI" id="CHEBI:15377"/>
        <dbReference type="ChEBI" id="CHEBI:43474"/>
        <dbReference type="ChEBI" id="CHEBI:57603"/>
        <dbReference type="ChEBI" id="CHEBI:58190"/>
    </reaction>
    <physiologicalReaction direction="left-to-right" evidence="1">
        <dbReference type="Rhea" id="RHEA:16090"/>
    </physiologicalReaction>
</comment>
<comment type="catalytic activity">
    <reaction evidence="3">
        <text>N-phosphocreatine + H2O = creatine + phosphate</text>
        <dbReference type="Rhea" id="RHEA:12977"/>
        <dbReference type="ChEBI" id="CHEBI:15377"/>
        <dbReference type="ChEBI" id="CHEBI:43474"/>
        <dbReference type="ChEBI" id="CHEBI:57947"/>
        <dbReference type="ChEBI" id="CHEBI:58092"/>
        <dbReference type="EC" id="3.9.1.1"/>
    </reaction>
    <physiologicalReaction direction="left-to-right" evidence="3">
        <dbReference type="Rhea" id="RHEA:12978"/>
    </physiologicalReaction>
</comment>
<comment type="catalytic activity">
    <reaction evidence="3">
        <text>ATP + H2O = ADP + phosphate + H(+)</text>
        <dbReference type="Rhea" id="RHEA:13065"/>
        <dbReference type="ChEBI" id="CHEBI:15377"/>
        <dbReference type="ChEBI" id="CHEBI:15378"/>
        <dbReference type="ChEBI" id="CHEBI:30616"/>
        <dbReference type="ChEBI" id="CHEBI:43474"/>
        <dbReference type="ChEBI" id="CHEBI:456216"/>
    </reaction>
    <physiologicalReaction direction="left-to-right" evidence="3">
        <dbReference type="Rhea" id="RHEA:13066"/>
    </physiologicalReaction>
</comment>
<comment type="catalytic activity">
    <reaction evidence="3">
        <text>ADP + H2O = AMP + phosphate + H(+)</text>
        <dbReference type="Rhea" id="RHEA:61436"/>
        <dbReference type="ChEBI" id="CHEBI:15377"/>
        <dbReference type="ChEBI" id="CHEBI:15378"/>
        <dbReference type="ChEBI" id="CHEBI:43474"/>
        <dbReference type="ChEBI" id="CHEBI:456215"/>
        <dbReference type="ChEBI" id="CHEBI:456216"/>
    </reaction>
    <physiologicalReaction direction="left-to-right" evidence="3">
        <dbReference type="Rhea" id="RHEA:61437"/>
    </physiologicalReaction>
</comment>
<comment type="catalytic activity">
    <reaction evidence="3">
        <text>AMP + H2O = adenosine + phosphate</text>
        <dbReference type="Rhea" id="RHEA:29375"/>
        <dbReference type="ChEBI" id="CHEBI:15377"/>
        <dbReference type="ChEBI" id="CHEBI:16335"/>
        <dbReference type="ChEBI" id="CHEBI:43474"/>
        <dbReference type="ChEBI" id="CHEBI:456215"/>
    </reaction>
    <physiologicalReaction direction="left-to-right" evidence="3">
        <dbReference type="Rhea" id="RHEA:29376"/>
    </physiologicalReaction>
</comment>
<comment type="cofactor">
    <cofactor evidence="2">
        <name>Mg(2+)</name>
        <dbReference type="ChEBI" id="CHEBI:18420"/>
    </cofactor>
    <text evidence="2">Binds 1 Mg(2+) ion.</text>
</comment>
<comment type="cofactor">
    <cofactor evidence="2">
        <name>Zn(2+)</name>
        <dbReference type="ChEBI" id="CHEBI:29105"/>
    </cofactor>
    <text evidence="2">Binds 2 Zn(2+) ions.</text>
</comment>
<comment type="cofactor">
    <cofactor evidence="1">
        <name>Ca(2+)</name>
        <dbReference type="ChEBI" id="CHEBI:29108"/>
    </cofactor>
</comment>
<comment type="activity regulation">
    <text evidence="3">Phosphatase activity is specifically inhibited by 5-((5-chloro-2-methoxyphenyl)sulfonamido)nicotinamide (SBI-425).</text>
</comment>
<comment type="subunit">
    <text evidence="1">Homodimer.</text>
</comment>
<comment type="subcellular location">
    <subcellularLocation>
        <location evidence="1">Cell membrane</location>
        <topology evidence="1">Lipid-anchor</topology>
        <topology evidence="1">GPI-anchor</topology>
    </subcellularLocation>
    <subcellularLocation>
        <location evidence="7">Extracellular vesicle membrane</location>
        <topology evidence="3">Lipid-anchor</topology>
        <topology evidence="3">GPI-anchor</topology>
    </subcellularLocation>
    <subcellularLocation>
        <location evidence="3">Mitochondrion membrane</location>
        <topology evidence="3">Lipid-anchor</topology>
        <topology evidence="3">GPI-anchor</topology>
    </subcellularLocation>
    <subcellularLocation>
        <location evidence="3">Mitochondrion intermembrane space</location>
    </subcellularLocation>
    <text evidence="3 7">Localizes to special class of extracellular vesicles, named matrix vesicles (MVs), which are released by osteogenic cells (PubMed:32710882). Localizes to the mitochondria of thermogenic fat cells: tethered to mitochondrial membranes via a GPI-anchor and probably resides in the mitochondrion intermembrane space (By similarity).</text>
</comment>
<comment type="domain">
    <text evidence="1">Calcium-binding is structural and does not influence the alkaline phosphatase activity. At very high concentrations, calcium can however substitute for zinc at zinc-binding sites, leading to strongly reduced enzyme activity.</text>
</comment>
<comment type="PTM">
    <text evidence="1">N-glycosylated.</text>
</comment>
<comment type="similarity">
    <text evidence="9">Belongs to the alkaline phosphatase family.</text>
</comment>
<protein>
    <recommendedName>
        <fullName evidence="8">Alkaline phosphatase, tissue-nonspecific isozyme</fullName>
        <shortName>AP-TNAP</shortName>
        <shortName evidence="8">TNAP</shortName>
        <shortName>TNSALP</shortName>
        <ecNumber evidence="10">3.1.3.1</ecNumber>
    </recommendedName>
    <alternativeName>
        <fullName>Alkaline phosphatase liver/bone/kidney isozyme</fullName>
    </alternativeName>
    <alternativeName>
        <fullName evidence="9">Phosphoamidase</fullName>
    </alternativeName>
    <alternativeName>
        <fullName evidence="3">Phosphocreatine phosphatase</fullName>
        <ecNumber evidence="3">3.9.1.1</ecNumber>
    </alternativeName>
</protein>
<dbReference type="EC" id="3.1.3.1" evidence="10"/>
<dbReference type="EC" id="3.9.1.1" evidence="3"/>
<dbReference type="EMBL" id="Y00714">
    <property type="protein sequence ID" value="CAA68703.1"/>
    <property type="molecule type" value="mRNA"/>
</dbReference>
<dbReference type="EMBL" id="J03572">
    <property type="protein sequence ID" value="AAA41845.1"/>
    <property type="molecule type" value="mRNA"/>
</dbReference>
<dbReference type="EMBL" id="X16028">
    <property type="protein sequence ID" value="CAA34160.1"/>
    <property type="molecule type" value="Genomic_DNA"/>
</dbReference>
<dbReference type="EMBL" id="X16029">
    <property type="protein sequence ID" value="CAA34160.1"/>
    <property type="status" value="JOINED"/>
    <property type="molecule type" value="Genomic_DNA"/>
</dbReference>
<dbReference type="EMBL" id="X16030">
    <property type="protein sequence ID" value="CAA34160.1"/>
    <property type="status" value="JOINED"/>
    <property type="molecule type" value="Genomic_DNA"/>
</dbReference>
<dbReference type="EMBL" id="X16031">
    <property type="protein sequence ID" value="CAA34160.1"/>
    <property type="status" value="JOINED"/>
    <property type="molecule type" value="Genomic_DNA"/>
</dbReference>
<dbReference type="EMBL" id="X16032">
    <property type="protein sequence ID" value="CAA34160.1"/>
    <property type="status" value="JOINED"/>
    <property type="molecule type" value="Genomic_DNA"/>
</dbReference>
<dbReference type="EMBL" id="X16033">
    <property type="protein sequence ID" value="CAA34160.1"/>
    <property type="status" value="JOINED"/>
    <property type="molecule type" value="Genomic_DNA"/>
</dbReference>
<dbReference type="EMBL" id="X16034">
    <property type="protein sequence ID" value="CAA34160.1"/>
    <property type="status" value="JOINED"/>
    <property type="molecule type" value="Genomic_DNA"/>
</dbReference>
<dbReference type="EMBL" id="X16035">
    <property type="protein sequence ID" value="CAA34160.1"/>
    <property type="status" value="JOINED"/>
    <property type="molecule type" value="Genomic_DNA"/>
</dbReference>
<dbReference type="EMBL" id="X16036">
    <property type="protein sequence ID" value="CAA34160.1"/>
    <property type="status" value="JOINED"/>
    <property type="molecule type" value="Genomic_DNA"/>
</dbReference>
<dbReference type="EMBL" id="X16037">
    <property type="protein sequence ID" value="CAA34160.1"/>
    <property type="status" value="JOINED"/>
    <property type="molecule type" value="Genomic_DNA"/>
</dbReference>
<dbReference type="EMBL" id="X16038">
    <property type="protein sequence ID" value="CAA34160.1"/>
    <property type="status" value="JOINED"/>
    <property type="molecule type" value="Genomic_DNA"/>
</dbReference>
<dbReference type="EMBL" id="BC088399">
    <property type="protein sequence ID" value="AAH88399.1"/>
    <property type="molecule type" value="mRNA"/>
</dbReference>
<dbReference type="PIR" id="A28114">
    <property type="entry name" value="A28114"/>
</dbReference>
<dbReference type="PIR" id="S00289">
    <property type="entry name" value="S00289"/>
</dbReference>
<dbReference type="RefSeq" id="NP_001416309.1">
    <property type="nucleotide sequence ID" value="NM_001429380.1"/>
</dbReference>
<dbReference type="RefSeq" id="NP_037191.2">
    <property type="nucleotide sequence ID" value="NM_013059.3"/>
</dbReference>
<dbReference type="RefSeq" id="XP_006239198.1">
    <property type="nucleotide sequence ID" value="XM_006239136.5"/>
</dbReference>
<dbReference type="RefSeq" id="XP_017448654.1">
    <property type="nucleotide sequence ID" value="XM_017593165.1"/>
</dbReference>
<dbReference type="SMR" id="P08289"/>
<dbReference type="BioGRID" id="247616">
    <property type="interactions" value="1"/>
</dbReference>
<dbReference type="FunCoup" id="P08289">
    <property type="interactions" value="267"/>
</dbReference>
<dbReference type="IntAct" id="P08289">
    <property type="interactions" value="2"/>
</dbReference>
<dbReference type="STRING" id="10116.ENSRNOP00000019004"/>
<dbReference type="BindingDB" id="P08289"/>
<dbReference type="ChEMBL" id="CHEMBL2729"/>
<dbReference type="GlyConnect" id="12">
    <property type="glycosylation" value="31 N-Linked glycans"/>
</dbReference>
<dbReference type="GlyCosmos" id="P08289">
    <property type="glycosylation" value="5 sites, 56 glycans"/>
</dbReference>
<dbReference type="GlyGen" id="P08289">
    <property type="glycosylation" value="6 sites, 54 N-linked glycans (1 site)"/>
</dbReference>
<dbReference type="iPTMnet" id="P08289"/>
<dbReference type="PhosphoSitePlus" id="P08289"/>
<dbReference type="PaxDb" id="10116-ENSRNOP00000019004"/>
<dbReference type="Ensembl" id="ENSRNOT00000019004.6">
    <property type="protein sequence ID" value="ENSRNOP00000019004.3"/>
    <property type="gene ID" value="ENSRNOG00000013954.6"/>
</dbReference>
<dbReference type="GeneID" id="25586"/>
<dbReference type="KEGG" id="rno:25586"/>
<dbReference type="UCSC" id="RGD:2100">
    <property type="organism name" value="rat"/>
</dbReference>
<dbReference type="AGR" id="RGD:2100"/>
<dbReference type="CTD" id="249"/>
<dbReference type="RGD" id="2100">
    <property type="gene designation" value="Alpl"/>
</dbReference>
<dbReference type="eggNOG" id="KOG4126">
    <property type="taxonomic scope" value="Eukaryota"/>
</dbReference>
<dbReference type="GeneTree" id="ENSGT00950000183063"/>
<dbReference type="HOGENOM" id="CLU_008539_4_0_1"/>
<dbReference type="InParanoid" id="P08289"/>
<dbReference type="OMA" id="YQLMHNV"/>
<dbReference type="OrthoDB" id="5818554at2759"/>
<dbReference type="PhylomeDB" id="P08289"/>
<dbReference type="TreeFam" id="TF323513"/>
<dbReference type="BRENDA" id="3.1.3.1">
    <property type="organism ID" value="5301"/>
</dbReference>
<dbReference type="Reactome" id="R-RNO-163125">
    <property type="pathway name" value="Post-translational modification: synthesis of GPI-anchored proteins"/>
</dbReference>
<dbReference type="SABIO-RK" id="P08289"/>
<dbReference type="PRO" id="PR:P08289"/>
<dbReference type="Proteomes" id="UP000002494">
    <property type="component" value="Chromosome 5"/>
</dbReference>
<dbReference type="Bgee" id="ENSRNOG00000013954">
    <property type="expression patterns" value="Expressed in adult mammalian kidney and 19 other cell types or tissues"/>
</dbReference>
<dbReference type="ExpressionAtlas" id="P08289">
    <property type="expression patterns" value="baseline and differential"/>
</dbReference>
<dbReference type="GO" id="GO:0031012">
    <property type="term" value="C:extracellular matrix"/>
    <property type="evidence" value="ECO:0000266"/>
    <property type="project" value="RGD"/>
</dbReference>
<dbReference type="GO" id="GO:0065010">
    <property type="term" value="C:extracellular membrane-bounded organelle"/>
    <property type="evidence" value="ECO:0000314"/>
    <property type="project" value="UniProtKB"/>
</dbReference>
<dbReference type="GO" id="GO:0005615">
    <property type="term" value="C:extracellular space"/>
    <property type="evidence" value="ECO:0000314"/>
    <property type="project" value="RGD"/>
</dbReference>
<dbReference type="GO" id="GO:0005758">
    <property type="term" value="C:mitochondrial intermembrane space"/>
    <property type="evidence" value="ECO:0000250"/>
    <property type="project" value="UniProtKB"/>
</dbReference>
<dbReference type="GO" id="GO:0031966">
    <property type="term" value="C:mitochondrial membrane"/>
    <property type="evidence" value="ECO:0000250"/>
    <property type="project" value="UniProtKB"/>
</dbReference>
<dbReference type="GO" id="GO:0005886">
    <property type="term" value="C:plasma membrane"/>
    <property type="evidence" value="ECO:0000266"/>
    <property type="project" value="RGD"/>
</dbReference>
<dbReference type="GO" id="GO:0098552">
    <property type="term" value="C:side of membrane"/>
    <property type="evidence" value="ECO:0007669"/>
    <property type="project" value="UniProtKB-KW"/>
</dbReference>
<dbReference type="GO" id="GO:0043262">
    <property type="term" value="F:ADP phosphatase activity"/>
    <property type="evidence" value="ECO:0007669"/>
    <property type="project" value="RHEA"/>
</dbReference>
<dbReference type="GO" id="GO:0004035">
    <property type="term" value="F:alkaline phosphatase activity"/>
    <property type="evidence" value="ECO:0000314"/>
    <property type="project" value="RGD"/>
</dbReference>
<dbReference type="GO" id="GO:0016887">
    <property type="term" value="F:ATP hydrolysis activity"/>
    <property type="evidence" value="ECO:0007669"/>
    <property type="project" value="RHEA"/>
</dbReference>
<dbReference type="GO" id="GO:0005509">
    <property type="term" value="F:calcium ion binding"/>
    <property type="evidence" value="ECO:0000250"/>
    <property type="project" value="UniProtKB"/>
</dbReference>
<dbReference type="GO" id="GO:0004427">
    <property type="term" value="F:inorganic diphosphate phosphatase activity"/>
    <property type="evidence" value="ECO:0007669"/>
    <property type="project" value="RHEA"/>
</dbReference>
<dbReference type="GO" id="GO:0050187">
    <property type="term" value="F:phosphoamidase activity"/>
    <property type="evidence" value="ECO:0000250"/>
    <property type="project" value="UniProtKB"/>
</dbReference>
<dbReference type="GO" id="GO:0052732">
    <property type="term" value="F:phosphoethanolamine phosphatase activity"/>
    <property type="evidence" value="ECO:0000266"/>
    <property type="project" value="RGD"/>
</dbReference>
<dbReference type="GO" id="GO:0033883">
    <property type="term" value="F:pyridoxal phosphatase activity"/>
    <property type="evidence" value="ECO:0000250"/>
    <property type="project" value="UniProtKB"/>
</dbReference>
<dbReference type="GO" id="GO:0016462">
    <property type="term" value="F:pyrophosphatase activity"/>
    <property type="evidence" value="ECO:0000250"/>
    <property type="project" value="UniProtKB"/>
</dbReference>
<dbReference type="GO" id="GO:0031214">
    <property type="term" value="P:biomineral tissue development"/>
    <property type="evidence" value="ECO:0000318"/>
    <property type="project" value="GO_Central"/>
</dbReference>
<dbReference type="GO" id="GO:0030282">
    <property type="term" value="P:bone mineralization"/>
    <property type="evidence" value="ECO:0000250"/>
    <property type="project" value="UniProtKB"/>
</dbReference>
<dbReference type="GO" id="GO:0055074">
    <property type="term" value="P:calcium ion homeostasis"/>
    <property type="evidence" value="ECO:0000266"/>
    <property type="project" value="RGD"/>
</dbReference>
<dbReference type="GO" id="GO:0019725">
    <property type="term" value="P:cellular homeostasis"/>
    <property type="evidence" value="ECO:0000266"/>
    <property type="project" value="RGD"/>
</dbReference>
<dbReference type="GO" id="GO:0071529">
    <property type="term" value="P:cementum mineralization"/>
    <property type="evidence" value="ECO:0000270"/>
    <property type="project" value="RGD"/>
</dbReference>
<dbReference type="GO" id="GO:0003006">
    <property type="term" value="P:developmental process involved in reproduction"/>
    <property type="evidence" value="ECO:0000266"/>
    <property type="project" value="RGD"/>
</dbReference>
<dbReference type="GO" id="GO:0001958">
    <property type="term" value="P:endochondral ossification"/>
    <property type="evidence" value="ECO:0000266"/>
    <property type="project" value="RGD"/>
</dbReference>
<dbReference type="GO" id="GO:0140651">
    <property type="term" value="P:futile creatine cycle"/>
    <property type="evidence" value="ECO:0000266"/>
    <property type="project" value="RGD"/>
</dbReference>
<dbReference type="GO" id="GO:0140928">
    <property type="term" value="P:inhibition of non-skeletal tissue mineralization"/>
    <property type="evidence" value="ECO:0000266"/>
    <property type="project" value="RGD"/>
</dbReference>
<dbReference type="GO" id="GO:0055062">
    <property type="term" value="P:phosphate ion homeostasis"/>
    <property type="evidence" value="ECO:0000266"/>
    <property type="project" value="RGD"/>
</dbReference>
<dbReference type="GO" id="GO:0120162">
    <property type="term" value="P:positive regulation of cold-induced thermogenesis"/>
    <property type="evidence" value="ECO:0000250"/>
    <property type="project" value="UniProtKB"/>
</dbReference>
<dbReference type="GO" id="GO:0042822">
    <property type="term" value="P:pyridoxal phosphate metabolic process"/>
    <property type="evidence" value="ECO:0000266"/>
    <property type="project" value="RGD"/>
</dbReference>
<dbReference type="GO" id="GO:0046677">
    <property type="term" value="P:response to antibiotic"/>
    <property type="evidence" value="ECO:0000266"/>
    <property type="project" value="RGD"/>
</dbReference>
<dbReference type="GO" id="GO:0051384">
    <property type="term" value="P:response to glucocorticoid"/>
    <property type="evidence" value="ECO:0000314"/>
    <property type="project" value="RGD"/>
</dbReference>
<dbReference type="GO" id="GO:0032868">
    <property type="term" value="P:response to insulin"/>
    <property type="evidence" value="ECO:0000270"/>
    <property type="project" value="RGD"/>
</dbReference>
<dbReference type="GO" id="GO:0032496">
    <property type="term" value="P:response to lipopolysaccharide"/>
    <property type="evidence" value="ECO:0000270"/>
    <property type="project" value="RGD"/>
</dbReference>
<dbReference type="GO" id="GO:0036005">
    <property type="term" value="P:response to macrophage colony-stimulating factor"/>
    <property type="evidence" value="ECO:0000270"/>
    <property type="project" value="RGD"/>
</dbReference>
<dbReference type="GO" id="GO:1904383">
    <property type="term" value="P:response to sodium phosphate"/>
    <property type="evidence" value="ECO:0000266"/>
    <property type="project" value="RGD"/>
</dbReference>
<dbReference type="GO" id="GO:0034516">
    <property type="term" value="P:response to vitamin B6"/>
    <property type="evidence" value="ECO:0000266"/>
    <property type="project" value="RGD"/>
</dbReference>
<dbReference type="GO" id="GO:0033280">
    <property type="term" value="P:response to vitamin D"/>
    <property type="evidence" value="ECO:0000266"/>
    <property type="project" value="RGD"/>
</dbReference>
<dbReference type="CDD" id="cd16012">
    <property type="entry name" value="ALP"/>
    <property type="match status" value="1"/>
</dbReference>
<dbReference type="FunFam" id="3.40.720.10:FF:000008">
    <property type="entry name" value="Alkaline phosphatase"/>
    <property type="match status" value="1"/>
</dbReference>
<dbReference type="Gene3D" id="3.40.720.10">
    <property type="entry name" value="Alkaline Phosphatase, subunit A"/>
    <property type="match status" value="1"/>
</dbReference>
<dbReference type="InterPro" id="IPR001952">
    <property type="entry name" value="Alkaline_phosphatase"/>
</dbReference>
<dbReference type="InterPro" id="IPR018299">
    <property type="entry name" value="Alkaline_phosphatase_AS"/>
</dbReference>
<dbReference type="InterPro" id="IPR017850">
    <property type="entry name" value="Alkaline_phosphatase_core_sf"/>
</dbReference>
<dbReference type="PANTHER" id="PTHR11596">
    <property type="entry name" value="ALKALINE PHOSPHATASE"/>
    <property type="match status" value="1"/>
</dbReference>
<dbReference type="PANTHER" id="PTHR11596:SF74">
    <property type="entry name" value="ALKALINE PHOSPHATASE, TISSUE-NONSPECIFIC ISOZYME"/>
    <property type="match status" value="1"/>
</dbReference>
<dbReference type="Pfam" id="PF00245">
    <property type="entry name" value="Alk_phosphatase"/>
    <property type="match status" value="1"/>
</dbReference>
<dbReference type="PRINTS" id="PR00113">
    <property type="entry name" value="ALKPHPHTASE"/>
</dbReference>
<dbReference type="SMART" id="SM00098">
    <property type="entry name" value="alkPPc"/>
    <property type="match status" value="1"/>
</dbReference>
<dbReference type="SUPFAM" id="SSF53649">
    <property type="entry name" value="Alkaline phosphatase-like"/>
    <property type="match status" value="1"/>
</dbReference>
<dbReference type="PROSITE" id="PS00123">
    <property type="entry name" value="ALKALINE_PHOSPHATASE"/>
    <property type="match status" value="1"/>
</dbReference>
<reference key="1">
    <citation type="journal article" date="1988" name="Proc. Natl. Acad. Sci. U.S.A.">
        <title>Structure and expression of rat osteosarcoma (ROS 17/2.8) alkaline phosphatase: product of a single copy gene.</title>
        <authorList>
            <person name="Thiede M.A."/>
            <person name="Yoon K."/>
            <person name="Golub E.E."/>
            <person name="Noda M."/>
            <person name="Rodan G.A."/>
        </authorList>
    </citation>
    <scope>NUCLEOTIDE SEQUENCE [MRNA]</scope>
    <source>
        <tissue>Placenta</tissue>
    </source>
</reference>
<reference key="2">
    <citation type="journal article" date="1988" name="Biochem. J.">
        <title>Primary structure of rat liver alkaline phosphatase deduced from its cDNA.</title>
        <authorList>
            <person name="Misumi Y."/>
            <person name="Tashiro K."/>
            <person name="Hattori M."/>
            <person name="Sakaki Y."/>
            <person name="Ikehara Y."/>
        </authorList>
    </citation>
    <scope>NUCLEOTIDE SEQUENCE [MRNA]</scope>
    <scope>PROTEIN SEQUENCE OF 355-360 AND 401-404</scope>
    <scope>CATALYTIC ACTIVITY</scope>
    <source>
        <strain>Wistar</strain>
        <tissue>Liver</tissue>
    </source>
</reference>
<reference key="3">
    <citation type="journal article" date="1989" name="Eur. J. Biochem.">
        <title>Isolation and characterization of a rat liver alkaline phosphatase gene. A single gene with two promoters.</title>
        <authorList>
            <person name="Toh Y."/>
            <person name="Yamamoto M."/>
            <person name="Endo H."/>
            <person name="Misumi Y."/>
            <person name="Ikehara Y."/>
        </authorList>
    </citation>
    <scope>NUCLEOTIDE SEQUENCE [GENOMIC DNA]</scope>
    <source>
        <strain>Sprague-Dawley</strain>
        <tissue>Liver</tissue>
    </source>
</reference>
<reference key="4">
    <citation type="journal article" date="2004" name="Genome Res.">
        <title>The status, quality, and expansion of the NIH full-length cDNA project: the Mammalian Gene Collection (MGC).</title>
        <authorList>
            <consortium name="The MGC Project Team"/>
        </authorList>
    </citation>
    <scope>NUCLEOTIDE SEQUENCE [LARGE SCALE MRNA]</scope>
    <source>
        <tissue>Kidney</tissue>
    </source>
</reference>
<reference key="5">
    <citation type="journal article" date="1987" name="J. Biochem.">
        <title>Chemical identification of lipid components in the membranous form of rat liver alkaline phosphatase.</title>
        <authorList>
            <person name="Ogata S."/>
            <person name="Hayashi Y."/>
            <person name="Yasutake K."/>
            <person name="Ikehara Y."/>
        </authorList>
    </citation>
    <scope>PROTEIN SEQUENCE OF 18-47</scope>
    <scope>GPI-ANCHOR</scope>
    <source>
        <tissue>Liver</tissue>
    </source>
</reference>
<reference key="6">
    <citation type="journal article" date="2012" name="Nat. Commun.">
        <title>Quantitative maps of protein phosphorylation sites across 14 different rat organs and tissues.</title>
        <authorList>
            <person name="Lundby A."/>
            <person name="Secher A."/>
            <person name="Lage K."/>
            <person name="Nordsborg N.B."/>
            <person name="Dmytriyev A."/>
            <person name="Lundby C."/>
            <person name="Olsen J.V."/>
        </authorList>
    </citation>
    <scope>PHOSPHORYLATION [LARGE SCALE ANALYSIS] AT SER-110</scope>
    <scope>IDENTIFICATION BY MASS SPECTROMETRY [LARGE SCALE ANALYSIS]</scope>
</reference>
<reference key="7">
    <citation type="journal article" date="2020" name="Arch. Biochem. Biophys.">
        <title>Lipid composition modulates ATP hydrolysis and calcium phosphate mineral propagation by TNAP-harboring proteoliposomes.</title>
        <authorList>
            <person name="Favarin B.Z."/>
            <person name="Bolean M."/>
            <person name="Ramos A.P."/>
            <person name="Magrini A."/>
            <person name="Rosato N."/>
            <person name="Millan J.L."/>
            <person name="Bottini M."/>
            <person name="Costa-Filho A.J."/>
            <person name="Ciancaglini P."/>
        </authorList>
    </citation>
    <scope>SUBCELLULAR LOCATION</scope>
</reference>